<proteinExistence type="inferred from homology"/>
<feature type="signal peptide" evidence="1">
    <location>
        <begin position="1"/>
        <end position="16"/>
    </location>
</feature>
<feature type="chain" id="PRO_0000014298" description="C-type lectin domain-containing protein 158">
    <location>
        <begin position="17"/>
        <end position="211"/>
    </location>
</feature>
<reference key="1">
    <citation type="journal article" date="1998" name="Science">
        <title>Genome sequence of the nematode C. elegans: a platform for investigating biology.</title>
        <authorList>
            <consortium name="The C. elegans sequencing consortium"/>
        </authorList>
    </citation>
    <scope>NUCLEOTIDE SEQUENCE [LARGE SCALE GENOMIC DNA]</scope>
    <source>
        <strain>Bristol N2</strain>
    </source>
</reference>
<accession>Q21984</accession>
<name>CL158_CAEEL</name>
<sequence>MQKFILSAFVVALVAADCALKCPDGYFSFKRAPSAKNSMTGLWCVKAILSDTLISPNQAKQVCEKDGSILTSFENLDERTKLATVLRDFLSAKKLDRGGMIVDGHRLKNCETDDRTVLNAEPCRNSSTGFTTDEKHTDNTFMWKSWADTEPGQSIFEKQIESCLQLAISQFKSRTELINDVFCNYVKHPQNEGAYDLWNYGAVCGRLPEWN</sequence>
<dbReference type="EMBL" id="FO081247">
    <property type="protein sequence ID" value="CCD70179.1"/>
    <property type="molecule type" value="Genomic_DNA"/>
</dbReference>
<dbReference type="PIR" id="T16748">
    <property type="entry name" value="T16748"/>
</dbReference>
<dbReference type="RefSeq" id="NP_498491.1">
    <property type="nucleotide sequence ID" value="NM_066090.4"/>
</dbReference>
<dbReference type="SMR" id="Q21984"/>
<dbReference type="FunCoup" id="Q21984">
    <property type="interactions" value="811"/>
</dbReference>
<dbReference type="STRING" id="6239.R13F6.8.1"/>
<dbReference type="PaxDb" id="6239-R13F6.8"/>
<dbReference type="PeptideAtlas" id="Q21984"/>
<dbReference type="EnsemblMetazoa" id="R13F6.8.1">
    <property type="protein sequence ID" value="R13F6.8.1"/>
    <property type="gene ID" value="WBGene00020067"/>
</dbReference>
<dbReference type="GeneID" id="187871"/>
<dbReference type="KEGG" id="cel:CELE_R13F6.8"/>
<dbReference type="AGR" id="WB:WBGene00020067"/>
<dbReference type="CTD" id="187871"/>
<dbReference type="WormBase" id="R13F6.8">
    <property type="protein sequence ID" value="CE00795"/>
    <property type="gene ID" value="WBGene00020067"/>
    <property type="gene designation" value="clec-158"/>
</dbReference>
<dbReference type="eggNOG" id="KOG4297">
    <property type="taxonomic scope" value="Eukaryota"/>
</dbReference>
<dbReference type="GeneTree" id="ENSGT00970000196481"/>
<dbReference type="HOGENOM" id="CLU_1125419_0_0_1"/>
<dbReference type="InParanoid" id="Q21984"/>
<dbReference type="OMA" id="CVKTIFP"/>
<dbReference type="OrthoDB" id="5830968at2759"/>
<dbReference type="PhylomeDB" id="Q21984"/>
<dbReference type="PRO" id="PR:Q21984"/>
<dbReference type="Proteomes" id="UP000001940">
    <property type="component" value="Chromosome III"/>
</dbReference>
<dbReference type="Bgee" id="WBGene00020067">
    <property type="expression patterns" value="Expressed in adult organism and 1 other cell type or tissue"/>
</dbReference>
<dbReference type="Gene3D" id="3.10.100.10">
    <property type="entry name" value="Mannose-Binding Protein A, subunit A"/>
    <property type="match status" value="1"/>
</dbReference>
<dbReference type="InterPro" id="IPR016186">
    <property type="entry name" value="C-type_lectin-like/link_sf"/>
</dbReference>
<dbReference type="InterPro" id="IPR016187">
    <property type="entry name" value="CTDL_fold"/>
</dbReference>
<dbReference type="PANTHER" id="PTHR23124:SF140">
    <property type="entry name" value="C-TYPE LECTIN DOMAIN-CONTAINING PROTEIN 158"/>
    <property type="match status" value="1"/>
</dbReference>
<dbReference type="PANTHER" id="PTHR23124">
    <property type="entry name" value="C-TYPE LECTIN DOMAIN-CONTAINING PROTEIN-RELATED-RELATED"/>
    <property type="match status" value="1"/>
</dbReference>
<dbReference type="SUPFAM" id="SSF56436">
    <property type="entry name" value="C-type lectin-like"/>
    <property type="match status" value="1"/>
</dbReference>
<evidence type="ECO:0000255" key="1"/>
<gene>
    <name type="primary">clec-158</name>
    <name type="ORF">R13F6.8</name>
</gene>
<protein>
    <recommendedName>
        <fullName>C-type lectin domain-containing protein 158</fullName>
    </recommendedName>
</protein>
<organism>
    <name type="scientific">Caenorhabditis elegans</name>
    <dbReference type="NCBI Taxonomy" id="6239"/>
    <lineage>
        <taxon>Eukaryota</taxon>
        <taxon>Metazoa</taxon>
        <taxon>Ecdysozoa</taxon>
        <taxon>Nematoda</taxon>
        <taxon>Chromadorea</taxon>
        <taxon>Rhabditida</taxon>
        <taxon>Rhabditina</taxon>
        <taxon>Rhabditomorpha</taxon>
        <taxon>Rhabditoidea</taxon>
        <taxon>Rhabditidae</taxon>
        <taxon>Peloderinae</taxon>
        <taxon>Caenorhabditis</taxon>
    </lineage>
</organism>
<keyword id="KW-1185">Reference proteome</keyword>
<keyword id="KW-0732">Signal</keyword>